<proteinExistence type="inferred from homology"/>
<feature type="transit peptide" description="Chloroplast" evidence="6">
    <location>
        <begin position="1"/>
        <end position="35"/>
    </location>
</feature>
<feature type="chain" id="PRO_0000003684" description="Chlorophyll a-b binding protein 22L, chloroplastic">
    <location>
        <begin position="36"/>
        <end position="267"/>
    </location>
</feature>
<feature type="transmembrane region" description="Helical" evidence="4">
    <location>
        <begin position="101"/>
        <end position="121"/>
    </location>
</feature>
<feature type="transmembrane region" description="Helical" evidence="4">
    <location>
        <begin position="153"/>
        <end position="173"/>
    </location>
</feature>
<feature type="transmembrane region" description="Helical" evidence="4">
    <location>
        <begin position="182"/>
        <end position="202"/>
    </location>
</feature>
<feature type="transmembrane region" description="Helical" evidence="4">
    <location>
        <begin position="221"/>
        <end position="241"/>
    </location>
</feature>
<feature type="region of interest" description="Disordered" evidence="5">
    <location>
        <begin position="28"/>
        <end position="47"/>
    </location>
</feature>
<feature type="binding site" description="axial binding residue" evidence="3">
    <location>
        <position position="59"/>
    </location>
    <ligand>
        <name>chlorophyll b</name>
        <dbReference type="ChEBI" id="CHEBI:61721"/>
        <label>1</label>
    </ligand>
    <ligandPart>
        <name>Mg</name>
        <dbReference type="ChEBI" id="CHEBI:25107"/>
    </ligandPart>
</feature>
<feature type="binding site" evidence="1">
    <location>
        <position position="81"/>
    </location>
    <ligand>
        <name>chlorophyll a</name>
        <dbReference type="ChEBI" id="CHEBI:58416"/>
        <label>1</label>
    </ligand>
</feature>
<feature type="binding site" evidence="1">
    <location>
        <position position="87"/>
    </location>
    <ligand>
        <name>chlorophyll a</name>
        <dbReference type="ChEBI" id="CHEBI:58416"/>
        <label>1</label>
    </ligand>
</feature>
<feature type="binding site" description="axial binding residue" evidence="3">
    <location>
        <position position="100"/>
    </location>
    <ligand>
        <name>chlorophyll a</name>
        <dbReference type="ChEBI" id="CHEBI:58416"/>
        <label>1</label>
    </ligand>
    <ligandPart>
        <name>Mg</name>
        <dbReference type="ChEBI" id="CHEBI:25107"/>
    </ligandPart>
</feature>
<feature type="binding site" description="axial binding residue" evidence="3">
    <location>
        <position position="103"/>
    </location>
    <ligand>
        <name>chlorophyll a</name>
        <dbReference type="ChEBI" id="CHEBI:58416"/>
        <label>2</label>
    </ligand>
    <ligandPart>
        <name>Mg</name>
        <dbReference type="ChEBI" id="CHEBI:25107"/>
    </ligandPart>
</feature>
<feature type="binding site" evidence="1">
    <location>
        <position position="105"/>
    </location>
    <ligand>
        <name>chlorophyll b</name>
        <dbReference type="ChEBI" id="CHEBI:61721"/>
        <label>2</label>
    </ligand>
</feature>
<feature type="binding site" evidence="1">
    <location>
        <position position="138"/>
    </location>
    <ligand>
        <name>chlorophyll a</name>
        <dbReference type="ChEBI" id="CHEBI:58416"/>
        <label>3</label>
    </ligand>
</feature>
<feature type="binding site" evidence="1">
    <location>
        <position position="148"/>
    </location>
    <ligand>
        <name>chlorophyll a</name>
        <dbReference type="ChEBI" id="CHEBI:58416"/>
        <label>3</label>
    </ligand>
</feature>
<feature type="binding site" description="axial binding residue" evidence="3">
    <location>
        <position position="154"/>
    </location>
    <ligand>
        <name>chlorophyll b</name>
        <dbReference type="ChEBI" id="CHEBI:61721"/>
        <label>2</label>
    </ligand>
    <ligandPart>
        <name>Mg</name>
        <dbReference type="ChEBI" id="CHEBI:25107"/>
    </ligandPart>
</feature>
<feature type="binding site" evidence="1">
    <location>
        <position position="158"/>
    </location>
    <ligand>
        <name>chlorophyll b</name>
        <dbReference type="ChEBI" id="CHEBI:61721"/>
        <label>3</label>
    </ligand>
</feature>
<feature type="binding site" evidence="1">
    <location>
        <position position="166"/>
    </location>
    <ligand>
        <name>chlorophyll b</name>
        <dbReference type="ChEBI" id="CHEBI:61721"/>
        <label>4</label>
    </ligand>
</feature>
<feature type="binding site" evidence="2">
    <location>
        <position position="166"/>
    </location>
    <ligand>
        <name>chlorophyll b</name>
        <dbReference type="ChEBI" id="CHEBI:61721"/>
        <label>5</label>
    </ligand>
</feature>
<feature type="binding site" description="axial binding residue" evidence="3">
    <location>
        <position position="174"/>
    </location>
    <ligand>
        <name>chlorophyll b</name>
        <dbReference type="ChEBI" id="CHEBI:61721"/>
        <label>3</label>
    </ligand>
    <ligandPart>
        <name>Mg</name>
        <dbReference type="ChEBI" id="CHEBI:25107"/>
    </ligandPart>
</feature>
<feature type="binding site" evidence="1">
    <location>
        <position position="177"/>
    </location>
    <ligand>
        <name>chlorophyll b</name>
        <dbReference type="ChEBI" id="CHEBI:61721"/>
        <label>4</label>
    </ligand>
</feature>
<feature type="binding site" evidence="1">
    <location>
        <position position="183"/>
    </location>
    <ligand>
        <name>chlorophyll b</name>
        <dbReference type="ChEBI" id="CHEBI:61721"/>
        <label>2</label>
    </ligand>
</feature>
<feature type="binding site" evidence="1">
    <location>
        <position position="214"/>
    </location>
    <ligand>
        <name>chlorophyll a</name>
        <dbReference type="ChEBI" id="CHEBI:58416"/>
        <label>5</label>
    </ligand>
</feature>
<feature type="binding site" description="axial binding residue" evidence="3">
    <location>
        <position position="215"/>
    </location>
    <ligand>
        <name>chlorophyll a</name>
        <dbReference type="ChEBI" id="CHEBI:58416"/>
        <label>3</label>
    </ligand>
    <ligandPart>
        <name>Mg</name>
        <dbReference type="ChEBI" id="CHEBI:25107"/>
    </ligandPart>
</feature>
<feature type="binding site" description="axial binding residue" evidence="3">
    <location>
        <position position="218"/>
    </location>
    <ligand>
        <name>chlorophyll a</name>
        <dbReference type="ChEBI" id="CHEBI:58416"/>
        <label>4</label>
    </ligand>
    <ligandPart>
        <name>Mg</name>
        <dbReference type="ChEBI" id="CHEBI:25107"/>
    </ligandPart>
</feature>
<feature type="binding site" evidence="1">
    <location>
        <position position="220"/>
    </location>
    <ligand>
        <name>chlorophyll a</name>
        <dbReference type="ChEBI" id="CHEBI:58416"/>
        <label>1</label>
    </ligand>
</feature>
<feature type="binding site" description="axial binding residue" evidence="3">
    <location>
        <position position="232"/>
    </location>
    <ligand>
        <name>chlorophyll a</name>
        <dbReference type="ChEBI" id="CHEBI:58416"/>
        <label>5</label>
    </ligand>
    <ligandPart>
        <name>Mg</name>
        <dbReference type="ChEBI" id="CHEBI:25107"/>
    </ligandPart>
</feature>
<feature type="binding site" description="axial binding residue" evidence="3">
    <location>
        <position position="247"/>
    </location>
    <ligand>
        <name>chlorophyll a</name>
        <dbReference type="ChEBI" id="CHEBI:58416"/>
        <label>6</label>
    </ligand>
    <ligandPart>
        <name>Mg</name>
        <dbReference type="ChEBI" id="CHEBI:25107"/>
    </ligandPart>
</feature>
<feature type="binding site" evidence="1">
    <location>
        <position position="256"/>
    </location>
    <ligand>
        <name>chlorophyll a</name>
        <dbReference type="ChEBI" id="CHEBI:58416"/>
        <label>6</label>
    </ligand>
</feature>
<feature type="binding site" evidence="1">
    <location>
        <position position="263"/>
    </location>
    <ligand>
        <name>chlorophyll b</name>
        <dbReference type="ChEBI" id="CHEBI:61721"/>
        <label>5</label>
    </ligand>
</feature>
<feature type="modified residue" description="N2-acetylarginine" evidence="1">
    <location>
        <position position="36"/>
    </location>
</feature>
<feature type="modified residue" description="Phosphothreonine" evidence="1">
    <location>
        <position position="38"/>
    </location>
</feature>
<dbReference type="EMBL" id="X02359">
    <property type="protein sequence ID" value="CAA26212.1"/>
    <property type="molecule type" value="Genomic_DNA"/>
</dbReference>
<dbReference type="PIR" id="D22936">
    <property type="entry name" value="CDPJ2L"/>
</dbReference>
<dbReference type="SMR" id="P04780"/>
<dbReference type="GO" id="GO:0009535">
    <property type="term" value="C:chloroplast thylakoid membrane"/>
    <property type="evidence" value="ECO:0007669"/>
    <property type="project" value="UniProtKB-SubCell"/>
</dbReference>
<dbReference type="GO" id="GO:0009522">
    <property type="term" value="C:photosystem I"/>
    <property type="evidence" value="ECO:0007669"/>
    <property type="project" value="UniProtKB-KW"/>
</dbReference>
<dbReference type="GO" id="GO:0009523">
    <property type="term" value="C:photosystem II"/>
    <property type="evidence" value="ECO:0007669"/>
    <property type="project" value="UniProtKB-KW"/>
</dbReference>
<dbReference type="GO" id="GO:0016168">
    <property type="term" value="F:chlorophyll binding"/>
    <property type="evidence" value="ECO:0007669"/>
    <property type="project" value="UniProtKB-KW"/>
</dbReference>
<dbReference type="GO" id="GO:0046872">
    <property type="term" value="F:metal ion binding"/>
    <property type="evidence" value="ECO:0007669"/>
    <property type="project" value="UniProtKB-KW"/>
</dbReference>
<dbReference type="GO" id="GO:0009765">
    <property type="term" value="P:photosynthesis, light harvesting"/>
    <property type="evidence" value="ECO:0007669"/>
    <property type="project" value="InterPro"/>
</dbReference>
<dbReference type="FunFam" id="1.10.3460.10:FF:000001">
    <property type="entry name" value="Chlorophyll a-b binding protein, chloroplastic"/>
    <property type="match status" value="1"/>
</dbReference>
<dbReference type="Gene3D" id="1.10.3460.10">
    <property type="entry name" value="Chlorophyll a/b binding protein domain"/>
    <property type="match status" value="1"/>
</dbReference>
<dbReference type="InterPro" id="IPR001344">
    <property type="entry name" value="Chloro_AB-bd_pln"/>
</dbReference>
<dbReference type="InterPro" id="IPR022796">
    <property type="entry name" value="Chloroa_b-bind"/>
</dbReference>
<dbReference type="PANTHER" id="PTHR21649">
    <property type="entry name" value="CHLOROPHYLL A/B BINDING PROTEIN"/>
    <property type="match status" value="1"/>
</dbReference>
<dbReference type="Pfam" id="PF00504">
    <property type="entry name" value="Chloroa_b-bind"/>
    <property type="match status" value="1"/>
</dbReference>
<dbReference type="SUPFAM" id="SSF103511">
    <property type="entry name" value="Chlorophyll a-b binding protein"/>
    <property type="match status" value="1"/>
</dbReference>
<name>CB22_PETSP</name>
<organism>
    <name type="scientific">Petunia sp.</name>
    <name type="common">Petunia</name>
    <dbReference type="NCBI Taxonomy" id="4104"/>
    <lineage>
        <taxon>Eukaryota</taxon>
        <taxon>Viridiplantae</taxon>
        <taxon>Streptophyta</taxon>
        <taxon>Embryophyta</taxon>
        <taxon>Tracheophyta</taxon>
        <taxon>Spermatophyta</taxon>
        <taxon>Magnoliopsida</taxon>
        <taxon>eudicotyledons</taxon>
        <taxon>Gunneridae</taxon>
        <taxon>Pentapetalae</taxon>
        <taxon>asterids</taxon>
        <taxon>lamiids</taxon>
        <taxon>Solanales</taxon>
        <taxon>Solanaceae</taxon>
        <taxon>Petunioideae</taxon>
        <taxon>Petunia</taxon>
    </lineage>
</organism>
<comment type="function">
    <text>The light-harvesting complex (LHC) functions as a light receptor, it captures and delivers excitation energy to photosystems with which it is closely associated.</text>
</comment>
<comment type="cofactor">
    <text evidence="1">Binds at least 14 chlorophylls (8 Chl-a and 6 Chl-b) and carotenoids such as lutein and neoxanthin.</text>
</comment>
<comment type="subunit">
    <text>The LHC complex consists of chlorophyll a-b binding proteins.</text>
</comment>
<comment type="subcellular location">
    <subcellularLocation>
        <location>Plastid</location>
        <location>Chloroplast thylakoid membrane</location>
        <topology>Multi-pass membrane protein</topology>
    </subcellularLocation>
</comment>
<comment type="domain">
    <text>The N-terminus of the protein extends into the stroma where it is involved with adhesion of granal membranes and post-translational modifications; both are believed to mediate the distribution of excitation energy between photosystems I and II.</text>
</comment>
<comment type="PTM">
    <text evidence="1">Photoregulated by reversible phosphorylation of its threonine residues.</text>
</comment>
<comment type="miscellaneous">
    <text>There are at least 16 genes for the major CAB protein which can be classified into at least 5 small multigene families.</text>
</comment>
<comment type="similarity">
    <text evidence="6">Belongs to the light-harvesting chlorophyll a/b-binding (LHC) protein family.</text>
</comment>
<reference key="1">
    <citation type="journal article" date="1985" name="Nucleic Acids Res.">
        <title>The petunia chlorophyll a/b binding protein genes: a comparison of Cab genes from different gene families.</title>
        <authorList>
            <person name="Dunsmuir P."/>
        </authorList>
    </citation>
    <scope>NUCLEOTIDE SEQUENCE [GENOMIC DNA]</scope>
</reference>
<keyword id="KW-0007">Acetylation</keyword>
<keyword id="KW-0148">Chlorophyll</keyword>
<keyword id="KW-0150">Chloroplast</keyword>
<keyword id="KW-0157">Chromophore</keyword>
<keyword id="KW-0460">Magnesium</keyword>
<keyword id="KW-0472">Membrane</keyword>
<keyword id="KW-0479">Metal-binding</keyword>
<keyword id="KW-0597">Phosphoprotein</keyword>
<keyword id="KW-0602">Photosynthesis</keyword>
<keyword id="KW-0603">Photosystem I</keyword>
<keyword id="KW-0604">Photosystem II</keyword>
<keyword id="KW-0934">Plastid</keyword>
<keyword id="KW-0793">Thylakoid</keyword>
<keyword id="KW-0809">Transit peptide</keyword>
<keyword id="KW-0812">Transmembrane</keyword>
<keyword id="KW-1133">Transmembrane helix</keyword>
<protein>
    <recommendedName>
        <fullName>Chlorophyll a-b binding protein 22L, chloroplastic</fullName>
    </recommendedName>
    <alternativeName>
        <fullName>LHCII type I CAB-22L</fullName>
        <shortName>LHCP</shortName>
    </alternativeName>
</protein>
<gene>
    <name type="primary">CAB22L</name>
</gene>
<sequence length="267" mass="28408">MAAATMALSSSTFAGKVVKLSPSSSEITGNGKATMRKTATKAKPVSSGSPWYGPDRVKYLGPFSGEAPSYLTGEFPGDYGWDTAGLSADPETFAKNRELEVIHCRWAMLGALGCVFPELFARNGVKFGEAVWLKAGSQIFSEGGLDYLGNPSLVHAQSILAIWACQVLLMGAVEGYRVAGGPLGVVVDPLYPGGSFDPLGLAEDPEAFAELKVKETKNGRLAMFSMFGFFIQAIVTGKGPLENLADHLVDPVNNNAWSYATNFVPRK</sequence>
<accession>P04780</accession>
<evidence type="ECO:0000250" key="1"/>
<evidence type="ECO:0000250" key="2">
    <source>
        <dbReference type="UniProtKB" id="P07371"/>
    </source>
</evidence>
<evidence type="ECO:0000250" key="3">
    <source>
        <dbReference type="UniProtKB" id="P12333"/>
    </source>
</evidence>
<evidence type="ECO:0000255" key="4"/>
<evidence type="ECO:0000256" key="5">
    <source>
        <dbReference type="SAM" id="MobiDB-lite"/>
    </source>
</evidence>
<evidence type="ECO:0000305" key="6"/>